<accession>Q81T99</accession>
<accession>Q6I1H6</accession>
<accession>Q6KVC7</accession>
<dbReference type="EMBL" id="AE016879">
    <property type="protein sequence ID" value="AAP25331.1"/>
    <property type="molecule type" value="Genomic_DNA"/>
</dbReference>
<dbReference type="EMBL" id="AE017334">
    <property type="protein sequence ID" value="AAT30484.1"/>
    <property type="molecule type" value="Genomic_DNA"/>
</dbReference>
<dbReference type="EMBL" id="AE017225">
    <property type="protein sequence ID" value="AAT53605.1"/>
    <property type="molecule type" value="Genomic_DNA"/>
</dbReference>
<dbReference type="RefSeq" id="NP_843845.1">
    <property type="nucleotide sequence ID" value="NC_003997.3"/>
</dbReference>
<dbReference type="RefSeq" id="WP_000807310.1">
    <property type="nucleotide sequence ID" value="NZ_WXXJ01000001.1"/>
</dbReference>
<dbReference type="RefSeq" id="YP_027554.1">
    <property type="nucleotide sequence ID" value="NC_005945.1"/>
</dbReference>
<dbReference type="SMR" id="Q81T99"/>
<dbReference type="STRING" id="261594.GBAA_1387"/>
<dbReference type="DNASU" id="1086019"/>
<dbReference type="GeneID" id="93009671"/>
<dbReference type="KEGG" id="ban:BA_1387"/>
<dbReference type="KEGG" id="bar:GBAA_1387"/>
<dbReference type="KEGG" id="bat:BAS1285"/>
<dbReference type="PATRIC" id="fig|198094.11.peg.1362"/>
<dbReference type="eggNOG" id="COG0236">
    <property type="taxonomic scope" value="Bacteria"/>
</dbReference>
<dbReference type="HOGENOM" id="CLU_108696_19_0_9"/>
<dbReference type="OMA" id="ISDQMDD"/>
<dbReference type="OrthoDB" id="6462171at2"/>
<dbReference type="UniPathway" id="UPA00556"/>
<dbReference type="Proteomes" id="UP000000427">
    <property type="component" value="Chromosome"/>
</dbReference>
<dbReference type="Proteomes" id="UP000000594">
    <property type="component" value="Chromosome"/>
</dbReference>
<dbReference type="GO" id="GO:0005737">
    <property type="term" value="C:cytoplasm"/>
    <property type="evidence" value="ECO:0007669"/>
    <property type="project" value="UniProtKB-SubCell"/>
</dbReference>
<dbReference type="GO" id="GO:0036370">
    <property type="term" value="F:D-alanyl carrier activity"/>
    <property type="evidence" value="ECO:0007669"/>
    <property type="project" value="UniProtKB-UniRule"/>
</dbReference>
<dbReference type="GO" id="GO:0071555">
    <property type="term" value="P:cell wall organization"/>
    <property type="evidence" value="ECO:0007669"/>
    <property type="project" value="UniProtKB-KW"/>
</dbReference>
<dbReference type="GO" id="GO:0070395">
    <property type="term" value="P:lipoteichoic acid biosynthetic process"/>
    <property type="evidence" value="ECO:0007669"/>
    <property type="project" value="UniProtKB-UniRule"/>
</dbReference>
<dbReference type="FunFam" id="1.10.1200.10:FF:000004">
    <property type="entry name" value="D-alanyl carrier protein"/>
    <property type="match status" value="1"/>
</dbReference>
<dbReference type="Gene3D" id="1.10.1200.10">
    <property type="entry name" value="ACP-like"/>
    <property type="match status" value="1"/>
</dbReference>
<dbReference type="HAMAP" id="MF_00565">
    <property type="entry name" value="DltC"/>
    <property type="match status" value="1"/>
</dbReference>
<dbReference type="InterPro" id="IPR036736">
    <property type="entry name" value="ACP-like_sf"/>
</dbReference>
<dbReference type="InterPro" id="IPR003230">
    <property type="entry name" value="DltC"/>
</dbReference>
<dbReference type="InterPro" id="IPR009081">
    <property type="entry name" value="PP-bd_ACP"/>
</dbReference>
<dbReference type="NCBIfam" id="TIGR01688">
    <property type="entry name" value="dltC"/>
    <property type="match status" value="1"/>
</dbReference>
<dbReference type="NCBIfam" id="NF003464">
    <property type="entry name" value="PRK05087.1"/>
    <property type="match status" value="1"/>
</dbReference>
<dbReference type="Pfam" id="PF00550">
    <property type="entry name" value="PP-binding"/>
    <property type="match status" value="1"/>
</dbReference>
<dbReference type="SUPFAM" id="SSF47336">
    <property type="entry name" value="ACP-like"/>
    <property type="match status" value="1"/>
</dbReference>
<dbReference type="PROSITE" id="PS50075">
    <property type="entry name" value="CARRIER"/>
    <property type="match status" value="1"/>
</dbReference>
<keyword id="KW-0961">Cell wall biogenesis/degradation</keyword>
<keyword id="KW-0963">Cytoplasm</keyword>
<keyword id="KW-0596">Phosphopantetheine</keyword>
<keyword id="KW-0597">Phosphoprotein</keyword>
<keyword id="KW-1185">Reference proteome</keyword>
<proteinExistence type="inferred from homology"/>
<organism>
    <name type="scientific">Bacillus anthracis</name>
    <dbReference type="NCBI Taxonomy" id="1392"/>
    <lineage>
        <taxon>Bacteria</taxon>
        <taxon>Bacillati</taxon>
        <taxon>Bacillota</taxon>
        <taxon>Bacilli</taxon>
        <taxon>Bacillales</taxon>
        <taxon>Bacillaceae</taxon>
        <taxon>Bacillus</taxon>
        <taxon>Bacillus cereus group</taxon>
    </lineage>
</organism>
<feature type="chain" id="PRO_0000213082" description="D-alanyl carrier protein">
    <location>
        <begin position="1"/>
        <end position="79"/>
    </location>
</feature>
<feature type="domain" description="Carrier" evidence="1">
    <location>
        <begin position="2"/>
        <end position="79"/>
    </location>
</feature>
<feature type="modified residue" description="O-(pantetheine 4'-phosphoryl)serine" evidence="1">
    <location>
        <position position="37"/>
    </location>
</feature>
<sequence length="79" mass="9261">MAEFKEQVLDILEEVCENDIVKENLDVQLFEEGILDSFAVVSLLVEFQERLDIEVSISDFDRDEWATPNMVIKKLEEIR</sequence>
<protein>
    <recommendedName>
        <fullName evidence="1">D-alanyl carrier protein</fullName>
        <shortName evidence="1">DCP</shortName>
    </recommendedName>
    <alternativeName>
        <fullName evidence="1">D-alanine--poly(phosphoribitol) ligase subunit 2</fullName>
    </alternativeName>
</protein>
<comment type="function">
    <text evidence="1">Carrier protein involved in the D-alanylation of lipoteichoic acid (LTA). The loading of thioester-linked D-alanine onto DltC is catalyzed by D-alanine--D-alanyl carrier protein ligase DltA. The DltC-carried D-alanyl group is further transferred to cell membrane phosphatidylglycerol (PG) by forming an ester bond, probably catalyzed by DltD. D-alanylation of LTA plays an important role in modulating the properties of the cell wall in Gram-positive bacteria, influencing the net charge of the cell wall.</text>
</comment>
<comment type="pathway">
    <text evidence="1">Cell wall biogenesis; lipoteichoic acid biosynthesis.</text>
</comment>
<comment type="subcellular location">
    <subcellularLocation>
        <location evidence="1">Cytoplasm</location>
    </subcellularLocation>
</comment>
<comment type="PTM">
    <text evidence="1">4'-phosphopantetheine is transferred from CoA to a specific serine of apo-DCP.</text>
</comment>
<comment type="similarity">
    <text evidence="1">Belongs to the DltC family.</text>
</comment>
<name>DLTC_BACAN</name>
<evidence type="ECO:0000255" key="1">
    <source>
        <dbReference type="HAMAP-Rule" id="MF_00565"/>
    </source>
</evidence>
<gene>
    <name evidence="1" type="primary">dltC</name>
    <name type="ordered locus">BA_1387</name>
    <name type="ordered locus">GBAA_1387</name>
    <name type="ordered locus">BAS1285</name>
</gene>
<reference key="1">
    <citation type="journal article" date="2003" name="Nature">
        <title>The genome sequence of Bacillus anthracis Ames and comparison to closely related bacteria.</title>
        <authorList>
            <person name="Read T.D."/>
            <person name="Peterson S.N."/>
            <person name="Tourasse N.J."/>
            <person name="Baillie L.W."/>
            <person name="Paulsen I.T."/>
            <person name="Nelson K.E."/>
            <person name="Tettelin H."/>
            <person name="Fouts D.E."/>
            <person name="Eisen J.A."/>
            <person name="Gill S.R."/>
            <person name="Holtzapple E.K."/>
            <person name="Okstad O.A."/>
            <person name="Helgason E."/>
            <person name="Rilstone J."/>
            <person name="Wu M."/>
            <person name="Kolonay J.F."/>
            <person name="Beanan M.J."/>
            <person name="Dodson R.J."/>
            <person name="Brinkac L.M."/>
            <person name="Gwinn M.L."/>
            <person name="DeBoy R.T."/>
            <person name="Madpu R."/>
            <person name="Daugherty S.C."/>
            <person name="Durkin A.S."/>
            <person name="Haft D.H."/>
            <person name="Nelson W.C."/>
            <person name="Peterson J.D."/>
            <person name="Pop M."/>
            <person name="Khouri H.M."/>
            <person name="Radune D."/>
            <person name="Benton J.L."/>
            <person name="Mahamoud Y."/>
            <person name="Jiang L."/>
            <person name="Hance I.R."/>
            <person name="Weidman J.F."/>
            <person name="Berry K.J."/>
            <person name="Plaut R.D."/>
            <person name="Wolf A.M."/>
            <person name="Watkins K.L."/>
            <person name="Nierman W.C."/>
            <person name="Hazen A."/>
            <person name="Cline R.T."/>
            <person name="Redmond C."/>
            <person name="Thwaite J.E."/>
            <person name="White O."/>
            <person name="Salzberg S.L."/>
            <person name="Thomason B."/>
            <person name="Friedlander A.M."/>
            <person name="Koehler T.M."/>
            <person name="Hanna P.C."/>
            <person name="Kolstoe A.-B."/>
            <person name="Fraser C.M."/>
        </authorList>
    </citation>
    <scope>NUCLEOTIDE SEQUENCE [LARGE SCALE GENOMIC DNA]</scope>
    <source>
        <strain>Ames / isolate Porton</strain>
    </source>
</reference>
<reference key="2">
    <citation type="journal article" date="2009" name="J. Bacteriol.">
        <title>The complete genome sequence of Bacillus anthracis Ames 'Ancestor'.</title>
        <authorList>
            <person name="Ravel J."/>
            <person name="Jiang L."/>
            <person name="Stanley S.T."/>
            <person name="Wilson M.R."/>
            <person name="Decker R.S."/>
            <person name="Read T.D."/>
            <person name="Worsham P."/>
            <person name="Keim P.S."/>
            <person name="Salzberg S.L."/>
            <person name="Fraser-Liggett C.M."/>
            <person name="Rasko D.A."/>
        </authorList>
    </citation>
    <scope>NUCLEOTIDE SEQUENCE [LARGE SCALE GENOMIC DNA]</scope>
    <source>
        <strain>Ames ancestor</strain>
    </source>
</reference>
<reference key="3">
    <citation type="submission" date="2004-01" db="EMBL/GenBank/DDBJ databases">
        <title>Complete genome sequence of Bacillus anthracis Sterne.</title>
        <authorList>
            <person name="Brettin T.S."/>
            <person name="Bruce D."/>
            <person name="Challacombe J.F."/>
            <person name="Gilna P."/>
            <person name="Han C."/>
            <person name="Hill K."/>
            <person name="Hitchcock P."/>
            <person name="Jackson P."/>
            <person name="Keim P."/>
            <person name="Longmire J."/>
            <person name="Lucas S."/>
            <person name="Okinaka R."/>
            <person name="Richardson P."/>
            <person name="Rubin E."/>
            <person name="Tice H."/>
        </authorList>
    </citation>
    <scope>NUCLEOTIDE SEQUENCE [LARGE SCALE GENOMIC DNA]</scope>
    <source>
        <strain>Sterne</strain>
    </source>
</reference>